<feature type="initiator methionine" description="Removed" evidence="4">
    <location>
        <position position="1"/>
    </location>
</feature>
<feature type="chain" id="PRO_0000131834" description="Large ribosomal subunit protein eL34">
    <location>
        <begin position="2"/>
        <end position="117"/>
    </location>
</feature>
<feature type="modified residue" description="Phosphoserine" evidence="1">
    <location>
        <position position="12"/>
    </location>
</feature>
<feature type="modified residue" description="N6-acetyllysine" evidence="1">
    <location>
        <position position="36"/>
    </location>
</feature>
<feature type="modified residue" description="N6-acetyllysine" evidence="3">
    <location>
        <position position="43"/>
    </location>
</feature>
<feature type="cross-link" description="Glycyl lysine isopeptide (Lys-Gly) (interchain with G-Cter in SUMO2)" evidence="1">
    <location>
        <position position="108"/>
    </location>
</feature>
<accession>P11250</accession>
<dbReference type="EMBL" id="X14401">
    <property type="protein sequence ID" value="CAA32574.1"/>
    <property type="molecule type" value="mRNA"/>
</dbReference>
<dbReference type="PIR" id="S04271">
    <property type="entry name" value="R5RT34"/>
</dbReference>
<dbReference type="SMR" id="P11250"/>
<dbReference type="FunCoup" id="P11250">
    <property type="interactions" value="640"/>
</dbReference>
<dbReference type="IntAct" id="P11250">
    <property type="interactions" value="1"/>
</dbReference>
<dbReference type="MINT" id="P11250"/>
<dbReference type="STRING" id="10116.ENSRNOP00000009046"/>
<dbReference type="PhosphoSitePlus" id="P11250"/>
<dbReference type="jPOST" id="P11250"/>
<dbReference type="AGR" id="RGD:1309402"/>
<dbReference type="RGD" id="1309402">
    <property type="gene designation" value="Rpl34"/>
</dbReference>
<dbReference type="InParanoid" id="P11250"/>
<dbReference type="PhylomeDB" id="P11250"/>
<dbReference type="PRO" id="PR:P11250"/>
<dbReference type="Proteomes" id="UP000002494">
    <property type="component" value="Unplaced"/>
</dbReference>
<dbReference type="GO" id="GO:0005737">
    <property type="term" value="C:cytoplasm"/>
    <property type="evidence" value="ECO:0000266"/>
    <property type="project" value="RGD"/>
</dbReference>
<dbReference type="GO" id="GO:0022625">
    <property type="term" value="C:cytosolic large ribosomal subunit"/>
    <property type="evidence" value="ECO:0000314"/>
    <property type="project" value="RGD"/>
</dbReference>
<dbReference type="GO" id="GO:0022626">
    <property type="term" value="C:cytosolic ribosome"/>
    <property type="evidence" value="ECO:0000266"/>
    <property type="project" value="RGD"/>
</dbReference>
<dbReference type="GO" id="GO:0005783">
    <property type="term" value="C:endoplasmic reticulum"/>
    <property type="evidence" value="ECO:0007669"/>
    <property type="project" value="UniProtKB-SubCell"/>
</dbReference>
<dbReference type="GO" id="GO:0045202">
    <property type="term" value="C:synapse"/>
    <property type="evidence" value="ECO:0000266"/>
    <property type="project" value="RGD"/>
</dbReference>
<dbReference type="GO" id="GO:0003735">
    <property type="term" value="F:structural constituent of ribosome"/>
    <property type="evidence" value="ECO:0000266"/>
    <property type="project" value="RGD"/>
</dbReference>
<dbReference type="GO" id="GO:0006412">
    <property type="term" value="P:translation"/>
    <property type="evidence" value="ECO:0007669"/>
    <property type="project" value="InterPro"/>
</dbReference>
<dbReference type="Gene3D" id="6.20.340.10">
    <property type="match status" value="1"/>
</dbReference>
<dbReference type="Gene3D" id="6.20.370.70">
    <property type="match status" value="1"/>
</dbReference>
<dbReference type="InterPro" id="IPR008195">
    <property type="entry name" value="Ribosomal_eL34"/>
</dbReference>
<dbReference type="InterPro" id="IPR038562">
    <property type="entry name" value="Ribosomal_eL34_C_sf"/>
</dbReference>
<dbReference type="InterPro" id="IPR018065">
    <property type="entry name" value="Ribosomal_eL34_CS"/>
</dbReference>
<dbReference type="PANTHER" id="PTHR46595">
    <property type="entry name" value="60S RIBOSOMAL PROTEIN L34"/>
    <property type="match status" value="1"/>
</dbReference>
<dbReference type="Pfam" id="PF01199">
    <property type="entry name" value="Ribosomal_L34e"/>
    <property type="match status" value="1"/>
</dbReference>
<dbReference type="PRINTS" id="PR01250">
    <property type="entry name" value="RIBOSOMALL34"/>
</dbReference>
<dbReference type="PROSITE" id="PS01145">
    <property type="entry name" value="RIBOSOMAL_L34E"/>
    <property type="match status" value="1"/>
</dbReference>
<proteinExistence type="evidence at protein level"/>
<comment type="function">
    <text evidence="1">Component of the large ribosomal subunit. The ribosome is a large ribonucleoprotein complex responsible for the synthesis of proteins in the cell.</text>
</comment>
<comment type="subunit">
    <text evidence="1">Component of the large ribosomal subunit.</text>
</comment>
<comment type="subcellular location">
    <subcellularLocation>
        <location evidence="1">Cytoplasm</location>
        <location evidence="1">Cytosol</location>
    </subcellularLocation>
    <subcellularLocation>
        <location evidence="1">Cytoplasm</location>
    </subcellularLocation>
    <subcellularLocation>
        <location evidence="2">Endoplasmic reticulum</location>
    </subcellularLocation>
    <text evidence="1 2">Detected on cytosolic polysomes (By similarity). Detected in ribosomes that are associated with the rough endoplasmic reticulum (By similarity).</text>
</comment>
<comment type="similarity">
    <text evidence="5">Belongs to the eukaryotic ribosomal protein eL34 family.</text>
</comment>
<organism>
    <name type="scientific">Rattus norvegicus</name>
    <name type="common">Rat</name>
    <dbReference type="NCBI Taxonomy" id="10116"/>
    <lineage>
        <taxon>Eukaryota</taxon>
        <taxon>Metazoa</taxon>
        <taxon>Chordata</taxon>
        <taxon>Craniata</taxon>
        <taxon>Vertebrata</taxon>
        <taxon>Euteleostomi</taxon>
        <taxon>Mammalia</taxon>
        <taxon>Eutheria</taxon>
        <taxon>Euarchontoglires</taxon>
        <taxon>Glires</taxon>
        <taxon>Rodentia</taxon>
        <taxon>Myomorpha</taxon>
        <taxon>Muroidea</taxon>
        <taxon>Muridae</taxon>
        <taxon>Murinae</taxon>
        <taxon>Rattus</taxon>
    </lineage>
</organism>
<protein>
    <recommendedName>
        <fullName evidence="5">Large ribosomal subunit protein eL34</fullName>
    </recommendedName>
    <alternativeName>
        <fullName>60S ribosomal protein L34</fullName>
    </alternativeName>
</protein>
<name>RL34_RAT</name>
<evidence type="ECO:0000250" key="1">
    <source>
        <dbReference type="UniProtKB" id="P49207"/>
    </source>
</evidence>
<evidence type="ECO:0000250" key="2">
    <source>
        <dbReference type="UniProtKB" id="Q29223"/>
    </source>
</evidence>
<evidence type="ECO:0000250" key="3">
    <source>
        <dbReference type="UniProtKB" id="Q9D1R9"/>
    </source>
</evidence>
<evidence type="ECO:0000269" key="4">
    <source>
    </source>
</evidence>
<evidence type="ECO:0000305" key="5"/>
<reference key="1">
    <citation type="journal article" date="1989" name="FEBS Lett.">
        <title>The primary structure of rat ribosomal protein L34.</title>
        <authorList>
            <person name="Aoyama Y."/>
            <person name="Chan Y.-L."/>
            <person name="Wool I.G."/>
        </authorList>
    </citation>
    <scope>NUCLEOTIDE SEQUENCE [MRNA]</scope>
    <scope>PROTEIN SEQUENCE OF 2-34</scope>
    <source>
        <strain>Sprague-Dawley</strain>
        <tissue>Liver</tissue>
    </source>
</reference>
<gene>
    <name type="primary">Rpl34</name>
</gene>
<sequence length="117" mass="13507">MVQRLTYRRRLSYNTASNKTRLSRTPGNRIVYLYTKKVGKAPKSACGVLPGRLRGVVAVRPKVLMRLSKTKKHVQQGLWWLHVRQVCPDRIKRAFLIEEQKIVVKVLKAQAQSQKAK</sequence>
<keyword id="KW-0007">Acetylation</keyword>
<keyword id="KW-0963">Cytoplasm</keyword>
<keyword id="KW-0903">Direct protein sequencing</keyword>
<keyword id="KW-0256">Endoplasmic reticulum</keyword>
<keyword id="KW-1017">Isopeptide bond</keyword>
<keyword id="KW-0597">Phosphoprotein</keyword>
<keyword id="KW-1185">Reference proteome</keyword>
<keyword id="KW-0687">Ribonucleoprotein</keyword>
<keyword id="KW-0689">Ribosomal protein</keyword>
<keyword id="KW-0832">Ubl conjugation</keyword>